<reference key="1">
    <citation type="submission" date="2008-01" db="EMBL/GenBank/DDBJ databases">
        <title>NISC comparative sequencing initiative.</title>
        <authorList>
            <person name="Antonellis A."/>
            <person name="Benjamin B."/>
            <person name="Blakesley R.W."/>
            <person name="Bouffard G.G."/>
            <person name="Brinkley C."/>
            <person name="Brooks S."/>
            <person name="Chu G."/>
            <person name="Chub I."/>
            <person name="Coleman H."/>
            <person name="Fuksenko T."/>
            <person name="Gestole M."/>
            <person name="Gregory M."/>
            <person name="Guan X."/>
            <person name="Gupta J."/>
            <person name="Gurson N."/>
            <person name="Han E."/>
            <person name="Han J."/>
            <person name="Hansen N."/>
            <person name="Hargrove A."/>
            <person name="Hines-Harris K."/>
            <person name="Ho S.-L."/>
            <person name="Hu P."/>
            <person name="Hunter G."/>
            <person name="Hurle B."/>
            <person name="Idol J.R."/>
            <person name="Johnson T."/>
            <person name="Knight E."/>
            <person name="Kwong P."/>
            <person name="Lee-Lin S.-Q."/>
            <person name="Legaspi R."/>
            <person name="Madden M."/>
            <person name="Maduro Q.L."/>
            <person name="Maduro V.B."/>
            <person name="Margulies E.H."/>
            <person name="Masiello C."/>
            <person name="Maskeri B."/>
            <person name="McDowell J."/>
            <person name="Merkulov G."/>
            <person name="Montemayor C."/>
            <person name="Mullikin J.C."/>
            <person name="Park M."/>
            <person name="Prasad A."/>
            <person name="Ramsahoye C."/>
            <person name="Reddix-Dugue N."/>
            <person name="Riebow N."/>
            <person name="Schandler K."/>
            <person name="Schueler M.G."/>
            <person name="Sison C."/>
            <person name="Smith L."/>
            <person name="Stantripop S."/>
            <person name="Thomas J.W."/>
            <person name="Thomas P.J."/>
            <person name="Tsipouri V."/>
            <person name="Young A."/>
            <person name="Green E.D."/>
        </authorList>
    </citation>
    <scope>NUCLEOTIDE SEQUENCE [LARGE SCALE GENOMIC DNA]</scope>
</reference>
<dbReference type="EC" id="2.7.1.67" evidence="5"/>
<dbReference type="EMBL" id="DP000572">
    <property type="protein sequence ID" value="ABY82093.1"/>
    <property type="molecule type" value="Genomic_DNA"/>
</dbReference>
<dbReference type="RefSeq" id="XP_017821753.1">
    <property type="nucleotide sequence ID" value="XM_017966264.1"/>
</dbReference>
<dbReference type="RefSeq" id="XP_035135509.1">
    <property type="nucleotide sequence ID" value="XM_035279618.1"/>
</dbReference>
<dbReference type="SMR" id="B0KWC1"/>
<dbReference type="FunCoup" id="B0KWC1">
    <property type="interactions" value="3474"/>
</dbReference>
<dbReference type="STRING" id="9483.ENSCJAP00000049607"/>
<dbReference type="Ensembl" id="ENSCJAT00000052949.4">
    <property type="protein sequence ID" value="ENSCJAP00000049607.4"/>
    <property type="gene ID" value="ENSCJAG00000007455.5"/>
</dbReference>
<dbReference type="Ensembl" id="ENSCJAT00000129704.1">
    <property type="protein sequence ID" value="ENSCJAP00000091206.1"/>
    <property type="gene ID" value="ENSCJAG00000007455.5"/>
</dbReference>
<dbReference type="GeneID" id="100386139"/>
<dbReference type="eggNOG" id="KOG0903">
    <property type="taxonomic scope" value="Eukaryota"/>
</dbReference>
<dbReference type="GeneTree" id="ENSGT00550000074892"/>
<dbReference type="InParanoid" id="B0KWC1"/>
<dbReference type="Proteomes" id="UP000008225">
    <property type="component" value="Chromosome 18"/>
</dbReference>
<dbReference type="GO" id="GO:0000139">
    <property type="term" value="C:Golgi membrane"/>
    <property type="evidence" value="ECO:0007669"/>
    <property type="project" value="UniProtKB-SubCell"/>
</dbReference>
<dbReference type="GO" id="GO:0005741">
    <property type="term" value="C:mitochondrial outer membrane"/>
    <property type="evidence" value="ECO:0007669"/>
    <property type="project" value="UniProtKB-SubCell"/>
</dbReference>
<dbReference type="GO" id="GO:0030867">
    <property type="term" value="C:rough endoplasmic reticulum membrane"/>
    <property type="evidence" value="ECO:0007669"/>
    <property type="project" value="UniProtKB-SubCell"/>
</dbReference>
<dbReference type="GO" id="GO:0004430">
    <property type="term" value="F:1-phosphatidylinositol 4-kinase activity"/>
    <property type="evidence" value="ECO:0000250"/>
    <property type="project" value="UniProtKB"/>
</dbReference>
<dbReference type="GO" id="GO:0071889">
    <property type="term" value="F:14-3-3 protein binding"/>
    <property type="evidence" value="ECO:0000250"/>
    <property type="project" value="UniProtKB"/>
</dbReference>
<dbReference type="GO" id="GO:0005524">
    <property type="term" value="F:ATP binding"/>
    <property type="evidence" value="ECO:0007669"/>
    <property type="project" value="UniProtKB-KW"/>
</dbReference>
<dbReference type="GO" id="GO:0046854">
    <property type="term" value="P:phosphatidylinositol phosphate biosynthetic process"/>
    <property type="evidence" value="ECO:0007669"/>
    <property type="project" value="InterPro"/>
</dbReference>
<dbReference type="GO" id="GO:0048015">
    <property type="term" value="P:phosphatidylinositol-mediated signaling"/>
    <property type="evidence" value="ECO:0007669"/>
    <property type="project" value="TreeGrafter"/>
</dbReference>
<dbReference type="CDD" id="cd22246">
    <property type="entry name" value="PI4KB_NTD"/>
    <property type="match status" value="1"/>
</dbReference>
<dbReference type="CDD" id="cd05168">
    <property type="entry name" value="PI4Kc_III_beta"/>
    <property type="match status" value="1"/>
</dbReference>
<dbReference type="FunFam" id="3.30.1010.10:FF:000031">
    <property type="entry name" value="Phosphatidylinositol 4-kinase beta"/>
    <property type="match status" value="1"/>
</dbReference>
<dbReference type="FunFam" id="1.10.1070.11:FF:000004">
    <property type="entry name" value="Phosphatidylinositol 4-kinase, catalytic, beta"/>
    <property type="match status" value="1"/>
</dbReference>
<dbReference type="Gene3D" id="1.10.1070.11">
    <property type="entry name" value="Phosphatidylinositol 3-/4-kinase, catalytic domain"/>
    <property type="match status" value="1"/>
</dbReference>
<dbReference type="Gene3D" id="3.30.1010.10">
    <property type="entry name" value="Phosphatidylinositol 3-kinase Catalytic Subunit, Chain A, domain 4"/>
    <property type="match status" value="1"/>
</dbReference>
<dbReference type="InterPro" id="IPR011009">
    <property type="entry name" value="Kinase-like_dom_sf"/>
</dbReference>
<dbReference type="InterPro" id="IPR000403">
    <property type="entry name" value="PI3/4_kinase_cat_dom"/>
</dbReference>
<dbReference type="InterPro" id="IPR036940">
    <property type="entry name" value="PI3/4_kinase_cat_sf"/>
</dbReference>
<dbReference type="InterPro" id="IPR018936">
    <property type="entry name" value="PI3/4_kinase_CS"/>
</dbReference>
<dbReference type="InterPro" id="IPR001263">
    <property type="entry name" value="PI3K_accessory_dom"/>
</dbReference>
<dbReference type="InterPro" id="IPR049160">
    <property type="entry name" value="PI4KB-PIK1_PIK"/>
</dbReference>
<dbReference type="InterPro" id="IPR015433">
    <property type="entry name" value="PI_Kinase"/>
</dbReference>
<dbReference type="PANTHER" id="PTHR10048:SF22">
    <property type="entry name" value="PHOSPHATIDYLINOSITOL 4-KINASE BETA"/>
    <property type="match status" value="1"/>
</dbReference>
<dbReference type="PANTHER" id="PTHR10048">
    <property type="entry name" value="PHOSPHATIDYLINOSITOL KINASE"/>
    <property type="match status" value="1"/>
</dbReference>
<dbReference type="Pfam" id="PF00454">
    <property type="entry name" value="PI3_PI4_kinase"/>
    <property type="match status" value="1"/>
</dbReference>
<dbReference type="Pfam" id="PF21245">
    <property type="entry name" value="PI4KB-PIK1_PIK"/>
    <property type="match status" value="1"/>
</dbReference>
<dbReference type="SMART" id="SM00146">
    <property type="entry name" value="PI3Kc"/>
    <property type="match status" value="1"/>
</dbReference>
<dbReference type="SUPFAM" id="SSF56112">
    <property type="entry name" value="Protein kinase-like (PK-like)"/>
    <property type="match status" value="1"/>
</dbReference>
<dbReference type="PROSITE" id="PS00915">
    <property type="entry name" value="PI3_4_KINASE_1"/>
    <property type="match status" value="1"/>
</dbReference>
<dbReference type="PROSITE" id="PS00916">
    <property type="entry name" value="PI3_4_KINASE_2"/>
    <property type="match status" value="1"/>
</dbReference>
<dbReference type="PROSITE" id="PS50290">
    <property type="entry name" value="PI3_4_KINASE_3"/>
    <property type="match status" value="1"/>
</dbReference>
<dbReference type="PROSITE" id="PS51545">
    <property type="entry name" value="PIK_HELICAL"/>
    <property type="match status" value="1"/>
</dbReference>
<feature type="initiator methionine" description="Removed" evidence="5">
    <location>
        <position position="1"/>
    </location>
</feature>
<feature type="chain" id="PRO_0000365163" description="Phosphatidylinositol 4-kinase beta">
    <location>
        <begin position="2"/>
        <end position="816"/>
    </location>
</feature>
<feature type="domain" description="PIK helical" evidence="7">
    <location>
        <begin position="52"/>
        <end position="242"/>
    </location>
</feature>
<feature type="domain" description="PI3K/PI4K catalytic" evidence="6">
    <location>
        <begin position="535"/>
        <end position="801"/>
    </location>
</feature>
<feature type="region of interest" description="Disordered" evidence="8">
    <location>
        <begin position="1"/>
        <end position="30"/>
    </location>
</feature>
<feature type="region of interest" description="Interaction with ACBD3" evidence="5">
    <location>
        <begin position="2"/>
        <end position="68"/>
    </location>
</feature>
<feature type="region of interest" description="Disordered" evidence="8">
    <location>
        <begin position="99"/>
        <end position="120"/>
    </location>
</feature>
<feature type="region of interest" description="Disordered" evidence="8">
    <location>
        <begin position="248"/>
        <end position="318"/>
    </location>
</feature>
<feature type="region of interest" description="G-loop" evidence="6">
    <location>
        <begin position="541"/>
        <end position="547"/>
    </location>
</feature>
<feature type="region of interest" description="Catalytic loop" evidence="6">
    <location>
        <begin position="668"/>
        <end position="676"/>
    </location>
</feature>
<feature type="region of interest" description="Activation loop" evidence="6">
    <location>
        <begin position="687"/>
        <end position="711"/>
    </location>
</feature>
<feature type="compositionally biased region" description="Polar residues" evidence="8">
    <location>
        <begin position="278"/>
        <end position="297"/>
    </location>
</feature>
<feature type="compositionally biased region" description="Polar residues" evidence="8">
    <location>
        <begin position="306"/>
        <end position="318"/>
    </location>
</feature>
<feature type="modified residue" description="N-acetylglycine" evidence="5">
    <location>
        <position position="2"/>
    </location>
</feature>
<feature type="modified residue" description="Phosphoserine" evidence="5">
    <location>
        <position position="258"/>
    </location>
</feature>
<feature type="modified residue" description="Phosphothreonine" evidence="5">
    <location>
        <position position="263"/>
    </location>
</feature>
<feature type="modified residue" description="Phosphoserine" evidence="5">
    <location>
        <position position="266"/>
    </location>
</feature>
<feature type="modified residue" description="Phosphoserine" evidence="4">
    <location>
        <position position="275"/>
    </location>
</feature>
<feature type="modified residue" description="Phosphoserine" evidence="5">
    <location>
        <position position="277"/>
    </location>
</feature>
<feature type="modified residue" description="Phosphoserine" evidence="4">
    <location>
        <position position="284"/>
    </location>
</feature>
<feature type="modified residue" description="Phosphoserine" evidence="5">
    <location>
        <position position="294"/>
    </location>
</feature>
<feature type="modified residue" description="Phosphoserine" evidence="5">
    <location>
        <position position="428"/>
    </location>
</feature>
<feature type="modified residue" description="Phosphothreonine" evidence="5">
    <location>
        <position position="438"/>
    </location>
</feature>
<feature type="modified residue" description="Phosphoserine" evidence="5">
    <location>
        <position position="511"/>
    </location>
</feature>
<feature type="modified residue" description="Phosphothreonine" evidence="5">
    <location>
        <position position="517"/>
    </location>
</feature>
<feature type="modified residue" description="Phosphothreonine" evidence="5">
    <location>
        <position position="519"/>
    </location>
</feature>
<organism>
    <name type="scientific">Callithrix jacchus</name>
    <name type="common">White-tufted-ear marmoset</name>
    <dbReference type="NCBI Taxonomy" id="9483"/>
    <lineage>
        <taxon>Eukaryota</taxon>
        <taxon>Metazoa</taxon>
        <taxon>Chordata</taxon>
        <taxon>Craniata</taxon>
        <taxon>Vertebrata</taxon>
        <taxon>Euteleostomi</taxon>
        <taxon>Mammalia</taxon>
        <taxon>Eutheria</taxon>
        <taxon>Euarchontoglires</taxon>
        <taxon>Primates</taxon>
        <taxon>Haplorrhini</taxon>
        <taxon>Platyrrhini</taxon>
        <taxon>Cebidae</taxon>
        <taxon>Callitrichinae</taxon>
        <taxon>Callithrix</taxon>
        <taxon>Callithrix</taxon>
    </lineage>
</organism>
<gene>
    <name type="primary">PI4KB</name>
    <name type="synonym">PIK4CB</name>
</gene>
<accession>B0KWC1</accession>
<evidence type="ECO:0000250" key="1"/>
<evidence type="ECO:0000250" key="2">
    <source>
        <dbReference type="UniProtKB" id="O02810"/>
    </source>
</evidence>
<evidence type="ECO:0000250" key="3">
    <source>
        <dbReference type="UniProtKB" id="O08561"/>
    </source>
</evidence>
<evidence type="ECO:0000250" key="4">
    <source>
        <dbReference type="UniProtKB" id="Q8BKC8"/>
    </source>
</evidence>
<evidence type="ECO:0000250" key="5">
    <source>
        <dbReference type="UniProtKB" id="Q9UBF8"/>
    </source>
</evidence>
<evidence type="ECO:0000255" key="6">
    <source>
        <dbReference type="PROSITE-ProRule" id="PRU00269"/>
    </source>
</evidence>
<evidence type="ECO:0000255" key="7">
    <source>
        <dbReference type="PROSITE-ProRule" id="PRU00878"/>
    </source>
</evidence>
<evidence type="ECO:0000256" key="8">
    <source>
        <dbReference type="SAM" id="MobiDB-lite"/>
    </source>
</evidence>
<evidence type="ECO:0000305" key="9"/>
<protein>
    <recommendedName>
        <fullName>Phosphatidylinositol 4-kinase beta</fullName>
        <shortName>PI4K-beta</shortName>
        <shortName>PI4Kbeta</shortName>
        <shortName>PtdIns 4-kinase beta</shortName>
        <ecNumber evidence="5">2.7.1.67</ecNumber>
    </recommendedName>
</protein>
<sequence>MGDTVVEPAPLKPTSEPTSGPPGNNGGSLLSVITEGVGELSVIDPEVAQKACQDVLEKVKLLHGGVAVSSRGAPLELVNGDGVDSEIRCLDDPPAQIREEEDEMGASVASGTAKGARRRRQNNSAKQSWLLRLFESKLFDISMAISYLYNSKEPGVQAYIGNRLFCFRNEDVDFYLPQLLNMYIHMDEDVGDAIKPYIVYRCRQSINFSLQCALLLGAYSSDMHISTQRHSRGTKLRKLILSDELKPAHRKRELPSLSPAPDTGLSPSKRTHQRSKSDATASISLSSNLKRTASNPKVENEDEELSSSTESIDNSFSSPVRLAPEREFIKSLMAIGKRLATLPTKEQKTQRLISELSLLNHKLPARVWLPTAGFDHHVVRVPHTQAVVLNSKDKAPYLIYVEVLECENFDTTSVPARIPENRIRSTRSVENLPECGITHEQRAGSFSTVPNYDNDDEAWSVDDIGELQVELPEVHTNSCDNISQFSVDSITSQESKEPVFIAAGDIRRRLSEQLAHTPTAFKRDPEDPSAVALKEPWQEKVRRIREGSPYGHLPNWRLLSVIVKCGDDLRQELLAFQVLKQLQSIWEQERVPLWIKPYKILVISADSGMIEPVVNAVSIHQVKKQSQLSLLDYFLQEHGSYTTEAFLSAQRNFVQSCAGYCLVCYLLQVKDRHNGNILLDAEGHIIHIDFGFILSSSPRNLGFETSAFKLTTEFVDVMGGLDGDMFNYYKMLMLQGLIAARKHMDKVVQIVEIMQQGSQLPCFHGSSTIRNLKERFHMSMTEEQLQLLVEQMVDGSMRSITTKLYDGFQYLTNGIM</sequence>
<keyword id="KW-0007">Acetylation</keyword>
<keyword id="KW-0067">ATP-binding</keyword>
<keyword id="KW-0256">Endoplasmic reticulum</keyword>
<keyword id="KW-0333">Golgi apparatus</keyword>
<keyword id="KW-0418">Kinase</keyword>
<keyword id="KW-0443">Lipid metabolism</keyword>
<keyword id="KW-0472">Membrane</keyword>
<keyword id="KW-0496">Mitochondrion</keyword>
<keyword id="KW-1000">Mitochondrion outer membrane</keyword>
<keyword id="KW-0547">Nucleotide-binding</keyword>
<keyword id="KW-0597">Phosphoprotein</keyword>
<keyword id="KW-1185">Reference proteome</keyword>
<keyword id="KW-0808">Transferase</keyword>
<name>PI4KB_CALJA</name>
<proteinExistence type="inferred from homology"/>
<comment type="function">
    <text evidence="3 5">Phosphorylates phosphatidylinositol (PI) in the first committed step in the production of the second messenger inositol-1,4,5,-trisphosphate (PIP). May regulate Golgi disintegration/reorganization during mitosis, possibly via its phosphorylation (By similarity). Involved in Golgi-to-plasma membrane trafficking (By similarity).</text>
</comment>
<comment type="catalytic activity">
    <reaction evidence="5">
        <text>a 1,2-diacyl-sn-glycero-3-phospho-(1D-myo-inositol) + ATP = a 1,2-diacyl-sn-glycero-3-phospho-(1D-myo-inositol 4-phosphate) + ADP + H(+)</text>
        <dbReference type="Rhea" id="RHEA:19877"/>
        <dbReference type="ChEBI" id="CHEBI:15378"/>
        <dbReference type="ChEBI" id="CHEBI:30616"/>
        <dbReference type="ChEBI" id="CHEBI:57880"/>
        <dbReference type="ChEBI" id="CHEBI:58178"/>
        <dbReference type="ChEBI" id="CHEBI:456216"/>
        <dbReference type="EC" id="2.7.1.67"/>
    </reaction>
    <physiologicalReaction direction="left-to-right" evidence="5">
        <dbReference type="Rhea" id="RHEA:19878"/>
    </physiologicalReaction>
</comment>
<comment type="cofactor">
    <cofactor evidence="5">
        <name>Mg(2+)</name>
        <dbReference type="ChEBI" id="CHEBI:18420"/>
    </cofactor>
    <cofactor evidence="5">
        <name>Mn(2+)</name>
        <dbReference type="ChEBI" id="CHEBI:29035"/>
    </cofactor>
</comment>
<comment type="activity regulation">
    <text evidence="2">Inhibited by wortmannin. Increased kinase activity upon interaction with NCS1/FREQ.</text>
</comment>
<comment type="subunit">
    <text evidence="3 5">Interacts with ARF1 and ARF3 in the Golgi complex, but not with ARF4, ARF5 or ARF6 (By similarity). Interacts with NCS1/FREQ in a calcium-independent manner. Interacts with CALN1/CABP8 and CALN2/CABP7; in a calcium-dependent manner; this interaction competes with NCS1/FREQ binding (By similarity). Interacts with ACBD3. Interacts with ARMH3, YWHAB, YWHAE, YWHAG, YWHAH, YWHAQ, YWHAZ and SFN (By similarity). Interacts with GGA2 (via VHS domain); the interaction is important for PI4KB location at the Golgi apparatus membrane (By similarity). Interacts with ATG9A.</text>
</comment>
<comment type="subcellular location">
    <subcellularLocation>
        <location evidence="1">Endomembrane system</location>
    </subcellularLocation>
    <subcellularLocation>
        <location evidence="1">Mitochondrion outer membrane</location>
        <topology evidence="1">Peripheral membrane protein</topology>
    </subcellularLocation>
    <subcellularLocation>
        <location evidence="1">Rough endoplasmic reticulum membrane</location>
        <topology evidence="1">Peripheral membrane protein</topology>
    </subcellularLocation>
    <subcellularLocation>
        <location evidence="1">Golgi apparatus</location>
    </subcellularLocation>
    <subcellularLocation>
        <location evidence="5">Golgi apparatus membrane</location>
    </subcellularLocation>
    <text evidence="5">Found in the outer membrane of mitochondria and membranes of the rough endoplasmic reticulum. Recruited to the Golgi complex by the small GTPase ARF to stimulate the synthesis of phosphatidylinositol 4,5-bisphosphate (PIP2) on the Golgi complex. Recruited to the Golgi apparatus membrane by ACBD3, GGA2 is also involved in the recruitment.</text>
</comment>
<comment type="similarity">
    <text evidence="9">Belongs to the PI3/PI4-kinase family. Type III PI4K subfamily.</text>
</comment>